<organism>
    <name type="scientific">Homo sapiens</name>
    <name type="common">Human</name>
    <dbReference type="NCBI Taxonomy" id="9606"/>
    <lineage>
        <taxon>Eukaryota</taxon>
        <taxon>Metazoa</taxon>
        <taxon>Chordata</taxon>
        <taxon>Craniata</taxon>
        <taxon>Vertebrata</taxon>
        <taxon>Euteleostomi</taxon>
        <taxon>Mammalia</taxon>
        <taxon>Eutheria</taxon>
        <taxon>Euarchontoglires</taxon>
        <taxon>Primates</taxon>
        <taxon>Haplorrhini</taxon>
        <taxon>Catarrhini</taxon>
        <taxon>Hominidae</taxon>
        <taxon>Homo</taxon>
    </lineage>
</organism>
<protein>
    <recommendedName>
        <fullName>Putative G antigen family E member 3</fullName>
    </recommendedName>
    <alternativeName>
        <fullName>Prostate-associated gene 2B protein</fullName>
        <shortName>PAGE-2B</shortName>
    </alternativeName>
</protein>
<gene>
    <name type="primary">PAGE2B</name>
    <name type="synonym">GAGEE3</name>
</gene>
<feature type="chain" id="PRO_0000247363" description="Putative G antigen family E member 3">
    <location>
        <begin position="1"/>
        <end position="111"/>
    </location>
</feature>
<feature type="region of interest" description="Disordered" evidence="2">
    <location>
        <begin position="1"/>
        <end position="67"/>
    </location>
</feature>
<feature type="compositionally biased region" description="Polar residues" evidence="2">
    <location>
        <begin position="8"/>
        <end position="24"/>
    </location>
</feature>
<feature type="modified residue" description="Phosphothreonine" evidence="1">
    <location>
        <position position="97"/>
    </location>
</feature>
<keyword id="KW-0597">Phosphoprotein</keyword>
<keyword id="KW-1267">Proteomics identification</keyword>
<keyword id="KW-1185">Reference proteome</keyword>
<proteinExistence type="evidence at protein level"/>
<reference key="1">
    <citation type="journal article" date="2005" name="Nature">
        <title>The DNA sequence of the human X chromosome.</title>
        <authorList>
            <person name="Ross M.T."/>
            <person name="Grafham D.V."/>
            <person name="Coffey A.J."/>
            <person name="Scherer S."/>
            <person name="McLay K."/>
            <person name="Muzny D."/>
            <person name="Platzer M."/>
            <person name="Howell G.R."/>
            <person name="Burrows C."/>
            <person name="Bird C.P."/>
            <person name="Frankish A."/>
            <person name="Lovell F.L."/>
            <person name="Howe K.L."/>
            <person name="Ashurst J.L."/>
            <person name="Fulton R.S."/>
            <person name="Sudbrak R."/>
            <person name="Wen G."/>
            <person name="Jones M.C."/>
            <person name="Hurles M.E."/>
            <person name="Andrews T.D."/>
            <person name="Scott C.E."/>
            <person name="Searle S."/>
            <person name="Ramser J."/>
            <person name="Whittaker A."/>
            <person name="Deadman R."/>
            <person name="Carter N.P."/>
            <person name="Hunt S.E."/>
            <person name="Chen R."/>
            <person name="Cree A."/>
            <person name="Gunaratne P."/>
            <person name="Havlak P."/>
            <person name="Hodgson A."/>
            <person name="Metzker M.L."/>
            <person name="Richards S."/>
            <person name="Scott G."/>
            <person name="Steffen D."/>
            <person name="Sodergren E."/>
            <person name="Wheeler D.A."/>
            <person name="Worley K.C."/>
            <person name="Ainscough R."/>
            <person name="Ambrose K.D."/>
            <person name="Ansari-Lari M.A."/>
            <person name="Aradhya S."/>
            <person name="Ashwell R.I."/>
            <person name="Babbage A.K."/>
            <person name="Bagguley C.L."/>
            <person name="Ballabio A."/>
            <person name="Banerjee R."/>
            <person name="Barker G.E."/>
            <person name="Barlow K.F."/>
            <person name="Barrett I.P."/>
            <person name="Bates K.N."/>
            <person name="Beare D.M."/>
            <person name="Beasley H."/>
            <person name="Beasley O."/>
            <person name="Beck A."/>
            <person name="Bethel G."/>
            <person name="Blechschmidt K."/>
            <person name="Brady N."/>
            <person name="Bray-Allen S."/>
            <person name="Bridgeman A.M."/>
            <person name="Brown A.J."/>
            <person name="Brown M.J."/>
            <person name="Bonnin D."/>
            <person name="Bruford E.A."/>
            <person name="Buhay C."/>
            <person name="Burch P."/>
            <person name="Burford D."/>
            <person name="Burgess J."/>
            <person name="Burrill W."/>
            <person name="Burton J."/>
            <person name="Bye J.M."/>
            <person name="Carder C."/>
            <person name="Carrel L."/>
            <person name="Chako J."/>
            <person name="Chapman J.C."/>
            <person name="Chavez D."/>
            <person name="Chen E."/>
            <person name="Chen G."/>
            <person name="Chen Y."/>
            <person name="Chen Z."/>
            <person name="Chinault C."/>
            <person name="Ciccodicola A."/>
            <person name="Clark S.Y."/>
            <person name="Clarke G."/>
            <person name="Clee C.M."/>
            <person name="Clegg S."/>
            <person name="Clerc-Blankenburg K."/>
            <person name="Clifford K."/>
            <person name="Cobley V."/>
            <person name="Cole C.G."/>
            <person name="Conquer J.S."/>
            <person name="Corby N."/>
            <person name="Connor R.E."/>
            <person name="David R."/>
            <person name="Davies J."/>
            <person name="Davis C."/>
            <person name="Davis J."/>
            <person name="Delgado O."/>
            <person name="Deshazo D."/>
            <person name="Dhami P."/>
            <person name="Ding Y."/>
            <person name="Dinh H."/>
            <person name="Dodsworth S."/>
            <person name="Draper H."/>
            <person name="Dugan-Rocha S."/>
            <person name="Dunham A."/>
            <person name="Dunn M."/>
            <person name="Durbin K.J."/>
            <person name="Dutta I."/>
            <person name="Eades T."/>
            <person name="Ellwood M."/>
            <person name="Emery-Cohen A."/>
            <person name="Errington H."/>
            <person name="Evans K.L."/>
            <person name="Faulkner L."/>
            <person name="Francis F."/>
            <person name="Frankland J."/>
            <person name="Fraser A.E."/>
            <person name="Galgoczy P."/>
            <person name="Gilbert J."/>
            <person name="Gill R."/>
            <person name="Gloeckner G."/>
            <person name="Gregory S.G."/>
            <person name="Gribble S."/>
            <person name="Griffiths C."/>
            <person name="Grocock R."/>
            <person name="Gu Y."/>
            <person name="Gwilliam R."/>
            <person name="Hamilton C."/>
            <person name="Hart E.A."/>
            <person name="Hawes A."/>
            <person name="Heath P.D."/>
            <person name="Heitmann K."/>
            <person name="Hennig S."/>
            <person name="Hernandez J."/>
            <person name="Hinzmann B."/>
            <person name="Ho S."/>
            <person name="Hoffs M."/>
            <person name="Howden P.J."/>
            <person name="Huckle E.J."/>
            <person name="Hume J."/>
            <person name="Hunt P.J."/>
            <person name="Hunt A.R."/>
            <person name="Isherwood J."/>
            <person name="Jacob L."/>
            <person name="Johnson D."/>
            <person name="Jones S."/>
            <person name="de Jong P.J."/>
            <person name="Joseph S.S."/>
            <person name="Keenan S."/>
            <person name="Kelly S."/>
            <person name="Kershaw J.K."/>
            <person name="Khan Z."/>
            <person name="Kioschis P."/>
            <person name="Klages S."/>
            <person name="Knights A.J."/>
            <person name="Kosiura A."/>
            <person name="Kovar-Smith C."/>
            <person name="Laird G.K."/>
            <person name="Langford C."/>
            <person name="Lawlor S."/>
            <person name="Leversha M."/>
            <person name="Lewis L."/>
            <person name="Liu W."/>
            <person name="Lloyd C."/>
            <person name="Lloyd D.M."/>
            <person name="Loulseged H."/>
            <person name="Loveland J.E."/>
            <person name="Lovell J.D."/>
            <person name="Lozado R."/>
            <person name="Lu J."/>
            <person name="Lyne R."/>
            <person name="Ma J."/>
            <person name="Maheshwari M."/>
            <person name="Matthews L.H."/>
            <person name="McDowall J."/>
            <person name="McLaren S."/>
            <person name="McMurray A."/>
            <person name="Meidl P."/>
            <person name="Meitinger T."/>
            <person name="Milne S."/>
            <person name="Miner G."/>
            <person name="Mistry S.L."/>
            <person name="Morgan M."/>
            <person name="Morris S."/>
            <person name="Mueller I."/>
            <person name="Mullikin J.C."/>
            <person name="Nguyen N."/>
            <person name="Nordsiek G."/>
            <person name="Nyakatura G."/>
            <person name="O'dell C.N."/>
            <person name="Okwuonu G."/>
            <person name="Palmer S."/>
            <person name="Pandian R."/>
            <person name="Parker D."/>
            <person name="Parrish J."/>
            <person name="Pasternak S."/>
            <person name="Patel D."/>
            <person name="Pearce A.V."/>
            <person name="Pearson D.M."/>
            <person name="Pelan S.E."/>
            <person name="Perez L."/>
            <person name="Porter K.M."/>
            <person name="Ramsey Y."/>
            <person name="Reichwald K."/>
            <person name="Rhodes S."/>
            <person name="Ridler K.A."/>
            <person name="Schlessinger D."/>
            <person name="Schueler M.G."/>
            <person name="Sehra H.K."/>
            <person name="Shaw-Smith C."/>
            <person name="Shen H."/>
            <person name="Sheridan E.M."/>
            <person name="Shownkeen R."/>
            <person name="Skuce C.D."/>
            <person name="Smith M.L."/>
            <person name="Sotheran E.C."/>
            <person name="Steingruber H.E."/>
            <person name="Steward C.A."/>
            <person name="Storey R."/>
            <person name="Swann R.M."/>
            <person name="Swarbreck D."/>
            <person name="Tabor P.E."/>
            <person name="Taudien S."/>
            <person name="Taylor T."/>
            <person name="Teague B."/>
            <person name="Thomas K."/>
            <person name="Thorpe A."/>
            <person name="Timms K."/>
            <person name="Tracey A."/>
            <person name="Trevanion S."/>
            <person name="Tromans A.C."/>
            <person name="d'Urso M."/>
            <person name="Verduzco D."/>
            <person name="Villasana D."/>
            <person name="Waldron L."/>
            <person name="Wall M."/>
            <person name="Wang Q."/>
            <person name="Warren J."/>
            <person name="Warry G.L."/>
            <person name="Wei X."/>
            <person name="West A."/>
            <person name="Whitehead S.L."/>
            <person name="Whiteley M.N."/>
            <person name="Wilkinson J.E."/>
            <person name="Willey D.L."/>
            <person name="Williams G."/>
            <person name="Williams L."/>
            <person name="Williamson A."/>
            <person name="Williamson H."/>
            <person name="Wilming L."/>
            <person name="Woodmansey R.L."/>
            <person name="Wray P.W."/>
            <person name="Yen J."/>
            <person name="Zhang J."/>
            <person name="Zhou J."/>
            <person name="Zoghbi H."/>
            <person name="Zorilla S."/>
            <person name="Buck D."/>
            <person name="Reinhardt R."/>
            <person name="Poustka A."/>
            <person name="Rosenthal A."/>
            <person name="Lehrach H."/>
            <person name="Meindl A."/>
            <person name="Minx P.J."/>
            <person name="Hillier L.W."/>
            <person name="Willard H.F."/>
            <person name="Wilson R.K."/>
            <person name="Waterston R.H."/>
            <person name="Rice C.M."/>
            <person name="Vaudin M."/>
            <person name="Coulson A."/>
            <person name="Nelson D.L."/>
            <person name="Weinstock G."/>
            <person name="Sulston J.E."/>
            <person name="Durbin R.M."/>
            <person name="Hubbard T."/>
            <person name="Gibbs R.A."/>
            <person name="Beck S."/>
            <person name="Rogers J."/>
            <person name="Bentley D.R."/>
        </authorList>
    </citation>
    <scope>NUCLEOTIDE SEQUENCE [LARGE SCALE GENOMIC DNA]</scope>
</reference>
<reference key="2">
    <citation type="journal article" date="2004" name="Genome Res.">
        <title>The status, quality, and expansion of the NIH full-length cDNA project: the Mammalian Gene Collection (MGC).</title>
        <authorList>
            <consortium name="The MGC Project Team"/>
        </authorList>
    </citation>
    <scope>NUCLEOTIDE SEQUENCE [LARGE SCALE MRNA]</scope>
</reference>
<name>GGEE3_HUMAN</name>
<sequence>MSEHVRTRSQSSERGNDQESSQPVGSVIVQEPTEEKRQEEEPPTDNQGIAPSGEIENEGAPAVQGPDMEAFQQELALLKIEDEPGDGPDVREGIMPTFDLTKVLEAGDAQP</sequence>
<dbReference type="EMBL" id="AL590240">
    <property type="status" value="NOT_ANNOTATED_CDS"/>
    <property type="molecule type" value="Genomic_DNA"/>
</dbReference>
<dbReference type="EMBL" id="BC130359">
    <property type="protein sequence ID" value="AAI30360.1"/>
    <property type="molecule type" value="mRNA"/>
</dbReference>
<dbReference type="CCDS" id="CCDS35304.1"/>
<dbReference type="RefSeq" id="NP_001015038.1">
    <property type="nucleotide sequence ID" value="NM_001015038.3"/>
</dbReference>
<dbReference type="RefSeq" id="XP_011507295.1">
    <property type="nucleotide sequence ID" value="XM_011508993.2"/>
</dbReference>
<dbReference type="RefSeq" id="XP_011529089.1">
    <property type="nucleotide sequence ID" value="XM_011530787.3"/>
</dbReference>
<dbReference type="RefSeq" id="XP_016855447.1">
    <property type="nucleotide sequence ID" value="XM_016999958.1"/>
</dbReference>
<dbReference type="RefSeq" id="XP_016855448.1">
    <property type="nucleotide sequence ID" value="XM_016999959.1"/>
</dbReference>
<dbReference type="RefSeq" id="XP_016885002.1">
    <property type="nucleotide sequence ID" value="XM_017029513.2"/>
</dbReference>
<dbReference type="RefSeq" id="XP_054183019.1">
    <property type="nucleotide sequence ID" value="XM_054327044.1"/>
</dbReference>
<dbReference type="RefSeq" id="XP_054183020.1">
    <property type="nucleotide sequence ID" value="XM_054327045.1"/>
</dbReference>
<dbReference type="SMR" id="Q5JRK9"/>
<dbReference type="BioGRID" id="133305">
    <property type="interactions" value="7"/>
</dbReference>
<dbReference type="IntAct" id="Q5JRK9">
    <property type="interactions" value="3"/>
</dbReference>
<dbReference type="STRING" id="9606.ENSP00000364110"/>
<dbReference type="iPTMnet" id="Q5JRK9"/>
<dbReference type="PhosphoSitePlus" id="Q5JRK9"/>
<dbReference type="BioMuta" id="PAGE2B"/>
<dbReference type="DMDM" id="74741864"/>
<dbReference type="jPOST" id="Q5JRK9"/>
<dbReference type="MassIVE" id="Q5JRK9"/>
<dbReference type="PaxDb" id="9606-ENSP00000364110"/>
<dbReference type="PeptideAtlas" id="Q5JRK9"/>
<dbReference type="ProteomicsDB" id="63097"/>
<dbReference type="Pumba" id="Q5JRK9"/>
<dbReference type="Antibodypedia" id="71518">
    <property type="antibodies" value="29 antibodies from 8 providers"/>
</dbReference>
<dbReference type="DNASU" id="389860"/>
<dbReference type="Ensembl" id="ENST00000374971.2">
    <property type="protein sequence ID" value="ENSP00000364110.1"/>
    <property type="gene ID" value="ENSG00000238269.9"/>
</dbReference>
<dbReference type="GeneID" id="389860"/>
<dbReference type="KEGG" id="hsa:389860"/>
<dbReference type="MANE-Select" id="ENST00000374971.2">
    <property type="protein sequence ID" value="ENSP00000364110.1"/>
    <property type="RefSeq nucleotide sequence ID" value="NM_001015038.3"/>
    <property type="RefSeq protein sequence ID" value="NP_001015038.1"/>
</dbReference>
<dbReference type="UCSC" id="uc004due.5">
    <property type="organism name" value="human"/>
</dbReference>
<dbReference type="AGR" id="HGNC:31805"/>
<dbReference type="CTD" id="389860"/>
<dbReference type="DisGeNET" id="389860"/>
<dbReference type="GeneCards" id="PAGE2B"/>
<dbReference type="HGNC" id="HGNC:31805">
    <property type="gene designation" value="PAGE2B"/>
</dbReference>
<dbReference type="HPA" id="ENSG00000238269">
    <property type="expression patterns" value="Tissue enriched (testis)"/>
</dbReference>
<dbReference type="MalaCards" id="PAGE2B"/>
<dbReference type="neXtProt" id="NX_Q5JRK9"/>
<dbReference type="OpenTargets" id="ENSG00000238269"/>
<dbReference type="PharmGKB" id="PA142671203"/>
<dbReference type="VEuPathDB" id="HostDB:ENSG00000238269"/>
<dbReference type="eggNOG" id="ENOG502TF3A">
    <property type="taxonomic scope" value="Eukaryota"/>
</dbReference>
<dbReference type="GeneTree" id="ENSGT00940000153097"/>
<dbReference type="InParanoid" id="Q5JRK9"/>
<dbReference type="OMA" id="WKTIRRA"/>
<dbReference type="OrthoDB" id="9534141at2759"/>
<dbReference type="PAN-GO" id="Q5JRK9">
    <property type="GO annotations" value="0 GO annotations based on evolutionary models"/>
</dbReference>
<dbReference type="PhylomeDB" id="Q5JRK9"/>
<dbReference type="TreeFam" id="TF340669"/>
<dbReference type="PathwayCommons" id="Q5JRK9"/>
<dbReference type="BioGRID-ORCS" id="389860">
    <property type="hits" value="8 hits in 667 CRISPR screens"/>
</dbReference>
<dbReference type="ChiTaRS" id="PAGE2B">
    <property type="organism name" value="human"/>
</dbReference>
<dbReference type="GenomeRNAi" id="389860"/>
<dbReference type="Pharos" id="Q5JRK9">
    <property type="development level" value="Tdark"/>
</dbReference>
<dbReference type="PRO" id="PR:Q5JRK9"/>
<dbReference type="Proteomes" id="UP000005640">
    <property type="component" value="Chromosome X"/>
</dbReference>
<dbReference type="RNAct" id="Q5JRK9">
    <property type="molecule type" value="protein"/>
</dbReference>
<dbReference type="Bgee" id="ENSG00000238269">
    <property type="expression patterns" value="Expressed in male germ line stem cell (sensu Vertebrata) in testis and 89 other cell types or tissues"/>
</dbReference>
<dbReference type="ExpressionAtlas" id="Q5JRK9">
    <property type="expression patterns" value="baseline and differential"/>
</dbReference>
<dbReference type="InterPro" id="IPR031320">
    <property type="entry name" value="GAGE"/>
</dbReference>
<dbReference type="InterPro" id="IPR008625">
    <property type="entry name" value="GAGE_fam"/>
</dbReference>
<dbReference type="PANTHER" id="PTHR14047:SF34">
    <property type="entry name" value="G ANTIGEN FAMILY E MEMBER 3-RELATED"/>
    <property type="match status" value="1"/>
</dbReference>
<dbReference type="PANTHER" id="PTHR14047">
    <property type="entry name" value="P ANTIGEN FAMILY MEMBER 5-RELATED"/>
    <property type="match status" value="1"/>
</dbReference>
<dbReference type="Pfam" id="PF05831">
    <property type="entry name" value="GAGE"/>
    <property type="match status" value="1"/>
</dbReference>
<dbReference type="SMART" id="SM01379">
    <property type="entry name" value="GAGE"/>
    <property type="match status" value="1"/>
</dbReference>
<accession>Q5JRK9</accession>
<accession>A1L414</accession>
<evidence type="ECO:0000250" key="1">
    <source>
        <dbReference type="UniProtKB" id="Q96GU1"/>
    </source>
</evidence>
<evidence type="ECO:0000256" key="2">
    <source>
        <dbReference type="SAM" id="MobiDB-lite"/>
    </source>
</evidence>
<evidence type="ECO:0000305" key="3"/>
<comment type="similarity">
    <text evidence="3">Belongs to the GAGE family.</text>
</comment>